<evidence type="ECO:0000250" key="1"/>
<dbReference type="EMBL" id="AE015929">
    <property type="protein sequence ID" value="AAO05856.1"/>
    <property type="molecule type" value="Genomic_DNA"/>
</dbReference>
<dbReference type="RefSeq" id="NP_765769.1">
    <property type="nucleotide sequence ID" value="NC_004461.1"/>
</dbReference>
<dbReference type="RefSeq" id="WP_001831835.1">
    <property type="nucleotide sequence ID" value="NZ_WBME01000025.1"/>
</dbReference>
<dbReference type="SMR" id="Q8CML2"/>
<dbReference type="DNASU" id="1056495"/>
<dbReference type="KEGG" id="sep:SE_2214"/>
<dbReference type="PATRIC" id="fig|176280.10.peg.2161"/>
<dbReference type="eggNOG" id="COG0664">
    <property type="taxonomic scope" value="Bacteria"/>
</dbReference>
<dbReference type="HOGENOM" id="CLU_1160528_0_0_9"/>
<dbReference type="OrthoDB" id="2397993at2"/>
<dbReference type="Proteomes" id="UP000001411">
    <property type="component" value="Chromosome"/>
</dbReference>
<dbReference type="GO" id="GO:0005737">
    <property type="term" value="C:cytoplasm"/>
    <property type="evidence" value="ECO:0007669"/>
    <property type="project" value="UniProtKB-SubCell"/>
</dbReference>
<dbReference type="GO" id="GO:0030552">
    <property type="term" value="F:cAMP binding"/>
    <property type="evidence" value="ECO:0007669"/>
    <property type="project" value="UniProtKB-KW"/>
</dbReference>
<dbReference type="GO" id="GO:0003677">
    <property type="term" value="F:DNA binding"/>
    <property type="evidence" value="ECO:0007669"/>
    <property type="project" value="UniProtKB-KW"/>
</dbReference>
<dbReference type="GO" id="GO:0006355">
    <property type="term" value="P:regulation of DNA-templated transcription"/>
    <property type="evidence" value="ECO:0007669"/>
    <property type="project" value="InterPro"/>
</dbReference>
<dbReference type="CDD" id="cd00038">
    <property type="entry name" value="CAP_ED"/>
    <property type="match status" value="1"/>
</dbReference>
<dbReference type="Gene3D" id="2.60.120.10">
    <property type="entry name" value="Jelly Rolls"/>
    <property type="match status" value="1"/>
</dbReference>
<dbReference type="Gene3D" id="1.10.10.10">
    <property type="entry name" value="Winged helix-like DNA-binding domain superfamily/Winged helix DNA-binding domain"/>
    <property type="match status" value="1"/>
</dbReference>
<dbReference type="InterPro" id="IPR000595">
    <property type="entry name" value="cNMP-bd_dom"/>
</dbReference>
<dbReference type="InterPro" id="IPR018490">
    <property type="entry name" value="cNMP-bd_dom_sf"/>
</dbReference>
<dbReference type="InterPro" id="IPR012318">
    <property type="entry name" value="HTH_CRP"/>
</dbReference>
<dbReference type="InterPro" id="IPR014710">
    <property type="entry name" value="RmlC-like_jellyroll"/>
</dbReference>
<dbReference type="InterPro" id="IPR036388">
    <property type="entry name" value="WH-like_DNA-bd_sf"/>
</dbReference>
<dbReference type="InterPro" id="IPR036390">
    <property type="entry name" value="WH_DNA-bd_sf"/>
</dbReference>
<dbReference type="Pfam" id="PF00027">
    <property type="entry name" value="cNMP_binding"/>
    <property type="match status" value="1"/>
</dbReference>
<dbReference type="Pfam" id="PF13545">
    <property type="entry name" value="HTH_Crp_2"/>
    <property type="match status" value="1"/>
</dbReference>
<dbReference type="SUPFAM" id="SSF51206">
    <property type="entry name" value="cAMP-binding domain-like"/>
    <property type="match status" value="1"/>
</dbReference>
<dbReference type="SUPFAM" id="SSF46785">
    <property type="entry name" value="Winged helix' DNA-binding domain"/>
    <property type="match status" value="1"/>
</dbReference>
<comment type="function">
    <text evidence="1">Positively regulates the expression of the arcABDCR operon under anaerobic conditions, thus playing an essential role in arginine catabolism. May also control the expression of genes encoding proteins which are involved in anaerobic metabolism. Can bind cyclic AMP (By similarity).</text>
</comment>
<comment type="subcellular location">
    <subcellularLocation>
        <location evidence="1">Cytoplasm</location>
    </subcellularLocation>
</comment>
<accession>Q8CML2</accession>
<keyword id="KW-0010">Activator</keyword>
<keyword id="KW-0114">cAMP</keyword>
<keyword id="KW-0116">cAMP-binding</keyword>
<keyword id="KW-0963">Cytoplasm</keyword>
<keyword id="KW-0238">DNA-binding</keyword>
<keyword id="KW-0547">Nucleotide-binding</keyword>
<keyword id="KW-0804">Transcription</keyword>
<keyword id="KW-0805">Transcription regulation</keyword>
<proteinExistence type="inferred from homology"/>
<organism>
    <name type="scientific">Staphylococcus epidermidis (strain ATCC 12228 / FDA PCI 1200)</name>
    <dbReference type="NCBI Taxonomy" id="176280"/>
    <lineage>
        <taxon>Bacteria</taxon>
        <taxon>Bacillati</taxon>
        <taxon>Bacillota</taxon>
        <taxon>Bacilli</taxon>
        <taxon>Bacillales</taxon>
        <taxon>Staphylococcaceae</taxon>
        <taxon>Staphylococcus</taxon>
    </lineage>
</organism>
<sequence length="228" mass="26924">MTGNQMFCRENELDESFKQLASYINIPVGVLLPFKSQCFVRHYNKGQIVYYSSDETTHIYLLLKGNIMRENFNLNGDVYRYLNREKVLFPLNNLFQDKVPNEMCTALTDCEMIGIPRDLIEYLCKNHEEIFVKLFSLLSETQCQHIEYNMALTSKLAKERVTKILRYLCQTVGYDHDEFYEIKHFMTIQLLSDMAGISRETTSHIINELREEKILFKNSKNWLVSKDL</sequence>
<feature type="chain" id="PRO_0000349418" description="HTH-type transcriptional regulator ArcR">
    <location>
        <begin position="1"/>
        <end position="228"/>
    </location>
</feature>
<feature type="domain" description="HTH crp-type">
    <location>
        <begin position="155"/>
        <end position="228"/>
    </location>
</feature>
<feature type="DNA-binding region" description="H-T-H motif" evidence="1">
    <location>
        <begin position="188"/>
        <end position="207"/>
    </location>
</feature>
<feature type="binding site">
    <location>
        <begin position="22"/>
        <end position="141"/>
    </location>
    <ligand>
        <name>a nucleoside 3',5'-cyclic phosphate</name>
        <dbReference type="ChEBI" id="CHEBI:58464"/>
    </ligand>
</feature>
<name>ARCR_STAES</name>
<reference key="1">
    <citation type="journal article" date="2003" name="Mol. Microbiol.">
        <title>Genome-based analysis of virulence genes in a non-biofilm-forming Staphylococcus epidermidis strain (ATCC 12228).</title>
        <authorList>
            <person name="Zhang Y.-Q."/>
            <person name="Ren S.-X."/>
            <person name="Li H.-L."/>
            <person name="Wang Y.-X."/>
            <person name="Fu G."/>
            <person name="Yang J."/>
            <person name="Qin Z.-Q."/>
            <person name="Miao Y.-G."/>
            <person name="Wang W.-Y."/>
            <person name="Chen R.-S."/>
            <person name="Shen Y."/>
            <person name="Chen Z."/>
            <person name="Yuan Z.-H."/>
            <person name="Zhao G.-P."/>
            <person name="Qu D."/>
            <person name="Danchin A."/>
            <person name="Wen Y.-M."/>
        </authorList>
    </citation>
    <scope>NUCLEOTIDE SEQUENCE [LARGE SCALE GENOMIC DNA]</scope>
    <source>
        <strain>ATCC 12228 / FDA PCI 1200</strain>
    </source>
</reference>
<gene>
    <name type="primary">arcR</name>
    <name type="ordered locus">SE_2214</name>
</gene>
<protein>
    <recommendedName>
        <fullName>HTH-type transcriptional regulator ArcR</fullName>
    </recommendedName>
</protein>